<sequence length="114" mass="13017">MGFRFPVKTKLPPGFINARVLKDSFKRQQAADHEVTVTALKYIARNTALPTRARMEAQLQLAVMPNYTRMTQVRNRCIATGHARSVITDFRLCRTQFREKAKNGELPGVKKGVW</sequence>
<comment type="subcellular location">
    <subcellularLocation>
        <location evidence="1">Mitochondrion</location>
    </subcellularLocation>
</comment>
<comment type="similarity">
    <text evidence="2">Belongs to the universal ribosomal protein uS14 family.</text>
</comment>
<gene>
    <name type="primary">MRP2</name>
    <name type="ordered locus">ABR184C</name>
</gene>
<proteinExistence type="inferred from homology"/>
<keyword id="KW-0496">Mitochondrion</keyword>
<keyword id="KW-1185">Reference proteome</keyword>
<keyword id="KW-0687">Ribonucleoprotein</keyword>
<keyword id="KW-0689">Ribosomal protein</keyword>
<organism>
    <name type="scientific">Eremothecium gossypii (strain ATCC 10895 / CBS 109.51 / FGSC 9923 / NRRL Y-1056)</name>
    <name type="common">Yeast</name>
    <name type="synonym">Ashbya gossypii</name>
    <dbReference type="NCBI Taxonomy" id="284811"/>
    <lineage>
        <taxon>Eukaryota</taxon>
        <taxon>Fungi</taxon>
        <taxon>Dikarya</taxon>
        <taxon>Ascomycota</taxon>
        <taxon>Saccharomycotina</taxon>
        <taxon>Saccharomycetes</taxon>
        <taxon>Saccharomycetales</taxon>
        <taxon>Saccharomycetaceae</taxon>
        <taxon>Eremothecium</taxon>
    </lineage>
</organism>
<dbReference type="EMBL" id="AF210628">
    <property type="protein sequence ID" value="AAG41250.1"/>
    <property type="molecule type" value="Genomic_DNA"/>
</dbReference>
<dbReference type="EMBL" id="AE016815">
    <property type="protein sequence ID" value="AAS50956.1"/>
    <property type="molecule type" value="Genomic_DNA"/>
</dbReference>
<dbReference type="RefSeq" id="NP_983132.1">
    <property type="nucleotide sequence ID" value="NM_208485.1"/>
</dbReference>
<dbReference type="SMR" id="Q9HF53"/>
<dbReference type="FunCoup" id="Q9HF53">
    <property type="interactions" value="588"/>
</dbReference>
<dbReference type="STRING" id="284811.Q9HF53"/>
<dbReference type="EnsemblFungi" id="AAS50956">
    <property type="protein sequence ID" value="AAS50956"/>
    <property type="gene ID" value="AGOS_ABR184C"/>
</dbReference>
<dbReference type="GeneID" id="4619242"/>
<dbReference type="KEGG" id="ago:AGOS_ABR184C"/>
<dbReference type="eggNOG" id="KOG1741">
    <property type="taxonomic scope" value="Eukaryota"/>
</dbReference>
<dbReference type="HOGENOM" id="CLU_139869_2_1_1"/>
<dbReference type="InParanoid" id="Q9HF53"/>
<dbReference type="OMA" id="FGLCRNQ"/>
<dbReference type="OrthoDB" id="413436at2759"/>
<dbReference type="Proteomes" id="UP000000591">
    <property type="component" value="Chromosome II"/>
</dbReference>
<dbReference type="GO" id="GO:0005763">
    <property type="term" value="C:mitochondrial small ribosomal subunit"/>
    <property type="evidence" value="ECO:0000318"/>
    <property type="project" value="GO_Central"/>
</dbReference>
<dbReference type="GO" id="GO:0003735">
    <property type="term" value="F:structural constituent of ribosome"/>
    <property type="evidence" value="ECO:0000318"/>
    <property type="project" value="GO_Central"/>
</dbReference>
<dbReference type="GO" id="GO:0006412">
    <property type="term" value="P:translation"/>
    <property type="evidence" value="ECO:0000318"/>
    <property type="project" value="GO_Central"/>
</dbReference>
<dbReference type="FunFam" id="1.10.287.1480:FF:000001">
    <property type="entry name" value="30S ribosomal protein S14"/>
    <property type="match status" value="1"/>
</dbReference>
<dbReference type="Gene3D" id="1.10.287.1480">
    <property type="match status" value="1"/>
</dbReference>
<dbReference type="InterPro" id="IPR001209">
    <property type="entry name" value="Ribosomal_uS14"/>
</dbReference>
<dbReference type="InterPro" id="IPR018271">
    <property type="entry name" value="Ribosomal_uS14_CS"/>
</dbReference>
<dbReference type="PANTHER" id="PTHR19836">
    <property type="entry name" value="30S RIBOSOMAL PROTEIN S14"/>
    <property type="match status" value="1"/>
</dbReference>
<dbReference type="PANTHER" id="PTHR19836:SF19">
    <property type="entry name" value="SMALL RIBOSOMAL SUBUNIT PROTEIN US14M"/>
    <property type="match status" value="1"/>
</dbReference>
<dbReference type="Pfam" id="PF00253">
    <property type="entry name" value="Ribosomal_S14"/>
    <property type="match status" value="1"/>
</dbReference>
<dbReference type="SUPFAM" id="SSF57716">
    <property type="entry name" value="Glucocorticoid receptor-like (DNA-binding domain)"/>
    <property type="match status" value="1"/>
</dbReference>
<dbReference type="PROSITE" id="PS00527">
    <property type="entry name" value="RIBOSOMAL_S14"/>
    <property type="match status" value="1"/>
</dbReference>
<name>RT02_EREGS</name>
<feature type="chain" id="PRO_0000131015" description="Small ribosomal subunit protein uS14m">
    <location>
        <begin position="1"/>
        <end position="114"/>
    </location>
</feature>
<protein>
    <recommendedName>
        <fullName evidence="2">Small ribosomal subunit protein uS14m</fullName>
    </recommendedName>
    <alternativeName>
        <fullName>37S ribosomal protein MRP2, mitochondrial</fullName>
    </alternativeName>
</protein>
<accession>Q9HF53</accession>
<reference key="1">
    <citation type="journal article" date="2001" name="Genetics">
        <title>Cell polarity and hyphal morphogenesis are controlled by multiple rho-protein modules in the filamentous ascomycete Ashbya gossypii.</title>
        <authorList>
            <person name="Wendland J."/>
            <person name="Philippsen P."/>
        </authorList>
    </citation>
    <scope>NUCLEOTIDE SEQUENCE [GENOMIC DNA]</scope>
</reference>
<reference key="2">
    <citation type="journal article" date="2004" name="Science">
        <title>The Ashbya gossypii genome as a tool for mapping the ancient Saccharomyces cerevisiae genome.</title>
        <authorList>
            <person name="Dietrich F.S."/>
            <person name="Voegeli S."/>
            <person name="Brachat S."/>
            <person name="Lerch A."/>
            <person name="Gates K."/>
            <person name="Steiner S."/>
            <person name="Mohr C."/>
            <person name="Poehlmann R."/>
            <person name="Luedi P."/>
            <person name="Choi S."/>
            <person name="Wing R.A."/>
            <person name="Flavier A."/>
            <person name="Gaffney T.D."/>
            <person name="Philippsen P."/>
        </authorList>
    </citation>
    <scope>NUCLEOTIDE SEQUENCE [LARGE SCALE GENOMIC DNA]</scope>
    <source>
        <strain>ATCC 10895 / CBS 109.51 / FGSC 9923 / NRRL Y-1056</strain>
    </source>
</reference>
<reference key="3">
    <citation type="journal article" date="2013" name="G3 (Bethesda)">
        <title>Genomes of Ashbya fungi isolated from insects reveal four mating-type loci, numerous translocations, lack of transposons, and distinct gene duplications.</title>
        <authorList>
            <person name="Dietrich F.S."/>
            <person name="Voegeli S."/>
            <person name="Kuo S."/>
            <person name="Philippsen P."/>
        </authorList>
    </citation>
    <scope>GENOME REANNOTATION</scope>
    <source>
        <strain>ATCC 10895 / CBS 109.51 / FGSC 9923 / NRRL Y-1056</strain>
    </source>
</reference>
<evidence type="ECO:0000250" key="1"/>
<evidence type="ECO:0000305" key="2"/>